<gene>
    <name type="primary">U62</name>
    <name type="synonym">8R</name>
</gene>
<name>UL91_HHV6U</name>
<proteinExistence type="inferred from homology"/>
<evidence type="ECO:0000305" key="1"/>
<accession>P24439</accession>
<keyword id="KW-1185">Reference proteome</keyword>
<reference key="1">
    <citation type="journal article" date="1990" name="J. Virol.">
        <title>Human herpesvirus 6 is closely related to human cytomegalovirus.</title>
        <authorList>
            <person name="Lawrence G.L."/>
            <person name="Chee M."/>
            <person name="Craxton M.A."/>
            <person name="Gompels U.A."/>
            <person name="Honess R.W."/>
            <person name="Barrell B.G."/>
        </authorList>
    </citation>
    <scope>NUCLEOTIDE SEQUENCE [GENOMIC DNA]</scope>
</reference>
<reference key="2">
    <citation type="journal article" date="1995" name="Virology">
        <title>The DNA sequence of human herpesvirus-6: structure, coding content, and genome evolution.</title>
        <authorList>
            <person name="Gompels U.A."/>
            <person name="Nicholas J."/>
            <person name="Lawrence G.L."/>
            <person name="Jones M."/>
            <person name="Thomson B.J."/>
            <person name="Martin M.E.D."/>
            <person name="Efstathiou S."/>
            <person name="Craxton M.A."/>
            <person name="Macaulay H.A."/>
        </authorList>
    </citation>
    <scope>NUCLEOTIDE SEQUENCE [LARGE SCALE GENOMIC DNA]</scope>
</reference>
<comment type="similarity">
    <text evidence="1">Belongs to the herpesviridae UL91 family.</text>
</comment>
<feature type="chain" id="PRO_0000116235" description="Protein U62">
    <location>
        <begin position="1"/>
        <end position="85"/>
    </location>
</feature>
<protein>
    <recommendedName>
        <fullName>Protein U62</fullName>
    </recommendedName>
</protein>
<dbReference type="EMBL" id="M68963">
    <property type="protein sequence ID" value="AAA65571.1"/>
    <property type="molecule type" value="Genomic_DNA"/>
</dbReference>
<dbReference type="EMBL" id="X83413">
    <property type="protein sequence ID" value="CAA58354.1"/>
    <property type="molecule type" value="Genomic_DNA"/>
</dbReference>
<dbReference type="PIR" id="H33560">
    <property type="entry name" value="H33560"/>
</dbReference>
<dbReference type="RefSeq" id="NP_042955.1">
    <property type="nucleotide sequence ID" value="NC_001664.2"/>
</dbReference>
<dbReference type="SMR" id="P24439"/>
<dbReference type="DNASU" id="1487943"/>
<dbReference type="GeneID" id="1487943"/>
<dbReference type="KEGG" id="vg:1487943"/>
<dbReference type="Proteomes" id="UP000009295">
    <property type="component" value="Segment"/>
</dbReference>
<dbReference type="InterPro" id="IPR035385">
    <property type="entry name" value="U62/UL91"/>
</dbReference>
<dbReference type="Pfam" id="PF17442">
    <property type="entry name" value="U62_UL91"/>
    <property type="match status" value="1"/>
</dbReference>
<sequence>MNSALNGIKDDFENCETKDDLFKIIDKISKNCNFIVEQVESLPRRVDSAAILFDNLAVEIFNDVIYRQNGVAAKIRQGNGQDIDT</sequence>
<organismHost>
    <name type="scientific">Homo sapiens</name>
    <name type="common">Human</name>
    <dbReference type="NCBI Taxonomy" id="9606"/>
</organismHost>
<organism>
    <name type="scientific">Human herpesvirus 6A (strain Uganda-1102)</name>
    <name type="common">HHV-6 variant A</name>
    <name type="synonym">Human B lymphotropic virus</name>
    <dbReference type="NCBI Taxonomy" id="10370"/>
    <lineage>
        <taxon>Viruses</taxon>
        <taxon>Duplodnaviria</taxon>
        <taxon>Heunggongvirae</taxon>
        <taxon>Peploviricota</taxon>
        <taxon>Herviviricetes</taxon>
        <taxon>Herpesvirales</taxon>
        <taxon>Orthoherpesviridae</taxon>
        <taxon>Betaherpesvirinae</taxon>
        <taxon>Roseolovirus</taxon>
        <taxon>Roseolovirus humanbeta6a</taxon>
        <taxon>Human betaherpesvirus 6A</taxon>
    </lineage>
</organism>